<evidence type="ECO:0000255" key="1">
    <source>
        <dbReference type="HAMAP-Rule" id="MF_01310"/>
    </source>
</evidence>
<evidence type="ECO:0000256" key="2">
    <source>
        <dbReference type="SAM" id="MobiDB-lite"/>
    </source>
</evidence>
<evidence type="ECO:0000305" key="3"/>
<name>RS11_PAEAT</name>
<proteinExistence type="inferred from homology"/>
<gene>
    <name evidence="1" type="primary">rpsK</name>
    <name type="ordered locus">AAur_2919</name>
</gene>
<dbReference type="EMBL" id="CP000474">
    <property type="protein sequence ID" value="ABM06642.1"/>
    <property type="status" value="ALT_INIT"/>
    <property type="molecule type" value="Genomic_DNA"/>
</dbReference>
<dbReference type="SMR" id="A1R8R6"/>
<dbReference type="STRING" id="290340.AAur_2919"/>
<dbReference type="KEGG" id="aau:AAur_2919"/>
<dbReference type="eggNOG" id="COG0100">
    <property type="taxonomic scope" value="Bacteria"/>
</dbReference>
<dbReference type="HOGENOM" id="CLU_072439_5_3_11"/>
<dbReference type="Proteomes" id="UP000000637">
    <property type="component" value="Chromosome"/>
</dbReference>
<dbReference type="GO" id="GO:1990904">
    <property type="term" value="C:ribonucleoprotein complex"/>
    <property type="evidence" value="ECO:0007669"/>
    <property type="project" value="UniProtKB-KW"/>
</dbReference>
<dbReference type="GO" id="GO:0005840">
    <property type="term" value="C:ribosome"/>
    <property type="evidence" value="ECO:0007669"/>
    <property type="project" value="UniProtKB-KW"/>
</dbReference>
<dbReference type="GO" id="GO:0019843">
    <property type="term" value="F:rRNA binding"/>
    <property type="evidence" value="ECO:0007669"/>
    <property type="project" value="UniProtKB-UniRule"/>
</dbReference>
<dbReference type="GO" id="GO:0003735">
    <property type="term" value="F:structural constituent of ribosome"/>
    <property type="evidence" value="ECO:0007669"/>
    <property type="project" value="InterPro"/>
</dbReference>
<dbReference type="GO" id="GO:0006412">
    <property type="term" value="P:translation"/>
    <property type="evidence" value="ECO:0007669"/>
    <property type="project" value="UniProtKB-UniRule"/>
</dbReference>
<dbReference type="Gene3D" id="3.30.420.80">
    <property type="entry name" value="Ribosomal protein S11"/>
    <property type="match status" value="1"/>
</dbReference>
<dbReference type="HAMAP" id="MF_01310">
    <property type="entry name" value="Ribosomal_uS11"/>
    <property type="match status" value="1"/>
</dbReference>
<dbReference type="InterPro" id="IPR001971">
    <property type="entry name" value="Ribosomal_uS11"/>
</dbReference>
<dbReference type="InterPro" id="IPR019981">
    <property type="entry name" value="Ribosomal_uS11_bac-type"/>
</dbReference>
<dbReference type="InterPro" id="IPR018102">
    <property type="entry name" value="Ribosomal_uS11_CS"/>
</dbReference>
<dbReference type="InterPro" id="IPR036967">
    <property type="entry name" value="Ribosomal_uS11_sf"/>
</dbReference>
<dbReference type="NCBIfam" id="NF003698">
    <property type="entry name" value="PRK05309.1"/>
    <property type="match status" value="1"/>
</dbReference>
<dbReference type="NCBIfam" id="TIGR03632">
    <property type="entry name" value="uS11_bact"/>
    <property type="match status" value="1"/>
</dbReference>
<dbReference type="PANTHER" id="PTHR11759">
    <property type="entry name" value="40S RIBOSOMAL PROTEIN S14/30S RIBOSOMAL PROTEIN S11"/>
    <property type="match status" value="1"/>
</dbReference>
<dbReference type="Pfam" id="PF00411">
    <property type="entry name" value="Ribosomal_S11"/>
    <property type="match status" value="1"/>
</dbReference>
<dbReference type="PIRSF" id="PIRSF002131">
    <property type="entry name" value="Ribosomal_S11"/>
    <property type="match status" value="1"/>
</dbReference>
<dbReference type="SUPFAM" id="SSF53137">
    <property type="entry name" value="Translational machinery components"/>
    <property type="match status" value="1"/>
</dbReference>
<dbReference type="PROSITE" id="PS00054">
    <property type="entry name" value="RIBOSOMAL_S11"/>
    <property type="match status" value="1"/>
</dbReference>
<protein>
    <recommendedName>
        <fullName evidence="1">Small ribosomal subunit protein uS11</fullName>
    </recommendedName>
    <alternativeName>
        <fullName evidence="3">30S ribosomal protein S11</fullName>
    </alternativeName>
</protein>
<comment type="function">
    <text evidence="1">Located on the platform of the 30S subunit, it bridges several disparate RNA helices of the 16S rRNA. Forms part of the Shine-Dalgarno cleft in the 70S ribosome.</text>
</comment>
<comment type="subunit">
    <text evidence="1">Part of the 30S ribosomal subunit. Interacts with proteins S7 and S18. Binds to IF-3.</text>
</comment>
<comment type="similarity">
    <text evidence="1">Belongs to the universal ribosomal protein uS11 family.</text>
</comment>
<comment type="sequence caution" evidence="3">
    <conflict type="erroneous initiation">
        <sequence resource="EMBL-CDS" id="ABM06642"/>
    </conflict>
</comment>
<keyword id="KW-0687">Ribonucleoprotein</keyword>
<keyword id="KW-0689">Ribosomal protein</keyword>
<keyword id="KW-0694">RNA-binding</keyword>
<keyword id="KW-0699">rRNA-binding</keyword>
<sequence>MPPKTRGAVRKPRRKDKKNIALGQAHIKSTFNNTIVSITDPNGAVSITDPNGAVISWASAGEVGFKGSRKSTPFAAQMAAEAAAKRAQEHGLRKVDVFVKGPGSGRETAIRSLQAAGLEVGSIQDVTPSAHNGCRPPKRRRV</sequence>
<accession>A1R8R6</accession>
<organism>
    <name type="scientific">Paenarthrobacter aurescens (strain TC1)</name>
    <dbReference type="NCBI Taxonomy" id="290340"/>
    <lineage>
        <taxon>Bacteria</taxon>
        <taxon>Bacillati</taxon>
        <taxon>Actinomycetota</taxon>
        <taxon>Actinomycetes</taxon>
        <taxon>Micrococcales</taxon>
        <taxon>Micrococcaceae</taxon>
        <taxon>Paenarthrobacter</taxon>
    </lineage>
</organism>
<feature type="chain" id="PRO_0000294714" description="Small ribosomal subunit protein uS11">
    <location>
        <begin position="1"/>
        <end position="142"/>
    </location>
</feature>
<feature type="region of interest" description="Disordered" evidence="2">
    <location>
        <begin position="1"/>
        <end position="21"/>
    </location>
</feature>
<feature type="compositionally biased region" description="Basic residues" evidence="2">
    <location>
        <begin position="7"/>
        <end position="17"/>
    </location>
</feature>
<reference key="1">
    <citation type="journal article" date="2006" name="PLoS Genet.">
        <title>Secrets of soil survival revealed by the genome sequence of Arthrobacter aurescens TC1.</title>
        <authorList>
            <person name="Mongodin E.F."/>
            <person name="Shapir N."/>
            <person name="Daugherty S.C."/>
            <person name="DeBoy R.T."/>
            <person name="Emerson J.B."/>
            <person name="Shvartzbeyn A."/>
            <person name="Radune D."/>
            <person name="Vamathevan J."/>
            <person name="Riggs F."/>
            <person name="Grinberg V."/>
            <person name="Khouri H.M."/>
            <person name="Wackett L.P."/>
            <person name="Nelson K.E."/>
            <person name="Sadowsky M.J."/>
        </authorList>
    </citation>
    <scope>NUCLEOTIDE SEQUENCE [LARGE SCALE GENOMIC DNA]</scope>
    <source>
        <strain>TC1</strain>
    </source>
</reference>